<feature type="chain" id="PRO_0000113504" description="Serine hydroxymethyltransferase, cytosolic">
    <location>
        <begin position="1"/>
        <end position="483"/>
    </location>
</feature>
<feature type="modified residue" description="N6-(pyridoxal phosphate)lysine" evidence="6 12">
    <location>
        <position position="257"/>
    </location>
</feature>
<feature type="splice variant" id="VSP_054610" description="In isoform 4." evidence="8">
    <location>
        <begin position="1"/>
        <end position="138"/>
    </location>
</feature>
<feature type="splice variant" id="VSP_006096" description="In isoform 3." evidence="10">
    <location>
        <begin position="273"/>
        <end position="352"/>
    </location>
</feature>
<feature type="splice variant" id="VSP_006095" description="In isoform 2." evidence="9">
    <location>
        <begin position="274"/>
        <end position="312"/>
    </location>
</feature>
<feature type="sequence variant" id="VAR_059795" description="In dbSNP:rs7215148.">
    <original>E</original>
    <variation>Q</variation>
    <location>
        <position position="340"/>
    </location>
</feature>
<feature type="sequence variant" id="VAR_022010" description="In dbSNP:rs1979277." evidence="1 7">
    <original>L</original>
    <variation>F</variation>
    <location>
        <position position="474"/>
    </location>
</feature>
<feature type="helix" evidence="14">
    <location>
        <begin position="15"/>
        <end position="23"/>
    </location>
</feature>
<feature type="helix" evidence="14">
    <location>
        <begin position="26"/>
        <end position="29"/>
    </location>
</feature>
<feature type="helix" evidence="14">
    <location>
        <begin position="31"/>
        <end position="45"/>
    </location>
</feature>
<feature type="strand" evidence="14">
    <location>
        <begin position="47"/>
        <end position="49"/>
    </location>
</feature>
<feature type="helix" evidence="14">
    <location>
        <begin position="59"/>
        <end position="65"/>
    </location>
</feature>
<feature type="helix" evidence="14">
    <location>
        <begin position="68"/>
        <end position="70"/>
    </location>
</feature>
<feature type="strand" evidence="14">
    <location>
        <begin position="80"/>
        <end position="83"/>
    </location>
</feature>
<feature type="turn" evidence="14">
    <location>
        <begin position="84"/>
        <end position="87"/>
    </location>
</feature>
<feature type="helix" evidence="14">
    <location>
        <begin position="88"/>
        <end position="103"/>
    </location>
</feature>
<feature type="turn" evidence="14">
    <location>
        <begin position="108"/>
        <end position="110"/>
    </location>
</feature>
<feature type="strand" evidence="14">
    <location>
        <begin position="111"/>
        <end position="114"/>
    </location>
</feature>
<feature type="strand" evidence="15">
    <location>
        <begin position="117"/>
        <end position="119"/>
    </location>
</feature>
<feature type="helix" evidence="14">
    <location>
        <begin position="120"/>
        <end position="131"/>
    </location>
</feature>
<feature type="strand" evidence="14">
    <location>
        <begin position="137"/>
        <end position="139"/>
    </location>
</feature>
<feature type="turn" evidence="14">
    <location>
        <begin position="143"/>
        <end position="146"/>
    </location>
</feature>
<feature type="helix" evidence="14">
    <location>
        <begin position="149"/>
        <end position="151"/>
    </location>
</feature>
<feature type="helix" evidence="14">
    <location>
        <begin position="162"/>
        <end position="166"/>
    </location>
</feature>
<feature type="strand" evidence="14">
    <location>
        <begin position="167"/>
        <end position="169"/>
    </location>
</feature>
<feature type="turn" evidence="14">
    <location>
        <begin position="176"/>
        <end position="178"/>
    </location>
</feature>
<feature type="helix" evidence="14">
    <location>
        <begin position="183"/>
        <end position="193"/>
    </location>
</feature>
<feature type="strand" evidence="14">
    <location>
        <begin position="196"/>
        <end position="201"/>
    </location>
</feature>
<feature type="helix" evidence="14">
    <location>
        <begin position="211"/>
        <end position="221"/>
    </location>
</feature>
<feature type="strand" evidence="14">
    <location>
        <begin position="224"/>
        <end position="228"/>
    </location>
</feature>
<feature type="helix" evidence="14">
    <location>
        <begin position="229"/>
        <end position="231"/>
    </location>
</feature>
<feature type="helix" evidence="14">
    <location>
        <begin position="233"/>
        <end position="238"/>
    </location>
</feature>
<feature type="helix" evidence="14">
    <location>
        <begin position="244"/>
        <end position="246"/>
    </location>
</feature>
<feature type="strand" evidence="14">
    <location>
        <begin position="249"/>
        <end position="256"/>
    </location>
</feature>
<feature type="helix" evidence="14">
    <location>
        <begin position="257"/>
        <end position="259"/>
    </location>
</feature>
<feature type="strand" evidence="14">
    <location>
        <begin position="265"/>
        <end position="270"/>
    </location>
</feature>
<feature type="strand" evidence="15">
    <location>
        <begin position="272"/>
        <end position="276"/>
    </location>
</feature>
<feature type="turn" evidence="14">
    <location>
        <begin position="278"/>
        <end position="280"/>
    </location>
</feature>
<feature type="strand" evidence="15">
    <location>
        <begin position="283"/>
        <end position="285"/>
    </location>
</feature>
<feature type="helix" evidence="14">
    <location>
        <begin position="288"/>
        <end position="296"/>
    </location>
</feature>
<feature type="turn" evidence="14">
    <location>
        <begin position="297"/>
        <end position="300"/>
    </location>
</feature>
<feature type="helix" evidence="14">
    <location>
        <begin position="306"/>
        <end position="319"/>
    </location>
</feature>
<feature type="helix" evidence="14">
    <location>
        <begin position="322"/>
        <end position="344"/>
    </location>
</feature>
<feature type="strand" evidence="14">
    <location>
        <begin position="355"/>
        <end position="362"/>
    </location>
</feature>
<feature type="helix" evidence="14">
    <location>
        <begin position="363"/>
        <end position="365"/>
    </location>
</feature>
<feature type="helix" evidence="14">
    <location>
        <begin position="370"/>
        <end position="379"/>
    </location>
</feature>
<feature type="strand" evidence="14">
    <location>
        <begin position="385"/>
        <end position="387"/>
    </location>
</feature>
<feature type="strand" evidence="15">
    <location>
        <begin position="395"/>
        <end position="397"/>
    </location>
</feature>
<feature type="strand" evidence="14">
    <location>
        <begin position="400"/>
        <end position="405"/>
    </location>
</feature>
<feature type="helix" evidence="14">
    <location>
        <begin position="406"/>
        <end position="409"/>
    </location>
</feature>
<feature type="turn" evidence="14">
    <location>
        <begin position="410"/>
        <end position="412"/>
    </location>
</feature>
<feature type="helix" evidence="14">
    <location>
        <begin position="415"/>
        <end position="439"/>
    </location>
</feature>
<feature type="helix" evidence="14">
    <location>
        <begin position="445"/>
        <end position="453"/>
    </location>
</feature>
<feature type="helix" evidence="14">
    <location>
        <begin position="455"/>
        <end position="472"/>
    </location>
</feature>
<feature type="strand" evidence="15">
    <location>
        <begin position="473"/>
        <end position="475"/>
    </location>
</feature>
<feature type="modified residue" description="N6-acetyllysine" evidence="13">
    <location sequence="P34896-2">
        <position position="271"/>
    </location>
</feature>
<gene>
    <name type="primary">SHMT1</name>
</gene>
<accession>P34896</accession>
<accession>B4DPM9</accession>
<accession>D3DXD0</accession>
<accession>Q96HY0</accession>
<accession>Q9UMD1</accession>
<accession>Q9UMD2</accession>
<dbReference type="EC" id="2.1.2.1" evidence="3 5"/>
<dbReference type="EMBL" id="L11931">
    <property type="protein sequence ID" value="AAA63257.1"/>
    <property type="molecule type" value="mRNA"/>
</dbReference>
<dbReference type="EMBL" id="L23928">
    <property type="protein sequence ID" value="AAA36020.1"/>
    <property type="molecule type" value="mRNA"/>
</dbReference>
<dbReference type="EMBL" id="L23928">
    <property type="protein sequence ID" value="AAA36019.1"/>
    <property type="molecule type" value="mRNA"/>
</dbReference>
<dbReference type="EMBL" id="L23928">
    <property type="protein sequence ID" value="AAA36018.1"/>
    <property type="molecule type" value="mRNA"/>
</dbReference>
<dbReference type="EMBL" id="Y14485">
    <property type="protein sequence ID" value="CAB54838.1"/>
    <property type="molecule type" value="mRNA"/>
</dbReference>
<dbReference type="EMBL" id="Y14486">
    <property type="protein sequence ID" value="CAB54839.1"/>
    <property type="molecule type" value="mRNA"/>
</dbReference>
<dbReference type="EMBL" id="Y14487">
    <property type="protein sequence ID" value="CAB54840.1"/>
    <property type="molecule type" value="mRNA"/>
</dbReference>
<dbReference type="EMBL" id="AK298415">
    <property type="protein sequence ID" value="BAG60641.1"/>
    <property type="molecule type" value="mRNA"/>
</dbReference>
<dbReference type="EMBL" id="AC127537">
    <property type="status" value="NOT_ANNOTATED_CDS"/>
    <property type="molecule type" value="Genomic_DNA"/>
</dbReference>
<dbReference type="EMBL" id="AL353997">
    <property type="status" value="NOT_ANNOTATED_CDS"/>
    <property type="molecule type" value="Genomic_DNA"/>
</dbReference>
<dbReference type="EMBL" id="CH471196">
    <property type="protein sequence ID" value="EAW55637.1"/>
    <property type="molecule type" value="Genomic_DNA"/>
</dbReference>
<dbReference type="EMBL" id="CH471196">
    <property type="protein sequence ID" value="EAW55640.1"/>
    <property type="molecule type" value="Genomic_DNA"/>
</dbReference>
<dbReference type="EMBL" id="CH471196">
    <property type="protein sequence ID" value="EAW55641.1"/>
    <property type="molecule type" value="Genomic_DNA"/>
</dbReference>
<dbReference type="EMBL" id="BC007979">
    <property type="protein sequence ID" value="AAH07979.1"/>
    <property type="molecule type" value="mRNA"/>
</dbReference>
<dbReference type="EMBL" id="BC022874">
    <property type="protein sequence ID" value="AAH22874.1"/>
    <property type="molecule type" value="mRNA"/>
</dbReference>
<dbReference type="EMBL" id="BC038598">
    <property type="protein sequence ID" value="AAH38598.1"/>
    <property type="molecule type" value="mRNA"/>
</dbReference>
<dbReference type="CCDS" id="CCDS11196.1">
    <molecule id="P34896-1"/>
</dbReference>
<dbReference type="CCDS" id="CCDS11197.1">
    <molecule id="P34896-2"/>
</dbReference>
<dbReference type="CCDS" id="CCDS62112.1">
    <molecule id="P34896-4"/>
</dbReference>
<dbReference type="PIR" id="A46746">
    <property type="entry name" value="A46746"/>
</dbReference>
<dbReference type="RefSeq" id="NP_001268715.1">
    <molecule id="P34896-4"/>
    <property type="nucleotide sequence ID" value="NM_001281786.2"/>
</dbReference>
<dbReference type="RefSeq" id="NP_004160.3">
    <molecule id="P34896-1"/>
    <property type="nucleotide sequence ID" value="NM_004169.4"/>
</dbReference>
<dbReference type="RefSeq" id="NP_683718.1">
    <molecule id="P34896-2"/>
    <property type="nucleotide sequence ID" value="NM_148918.3"/>
</dbReference>
<dbReference type="RefSeq" id="XP_005256824.1">
    <molecule id="P34896-1"/>
    <property type="nucleotide sequence ID" value="XM_005256767.4"/>
</dbReference>
<dbReference type="RefSeq" id="XP_011522294.1">
    <molecule id="P34896-3"/>
    <property type="nucleotide sequence ID" value="XM_011523992.4"/>
</dbReference>
<dbReference type="RefSeq" id="XP_016880446.1">
    <molecule id="P34896-1"/>
    <property type="nucleotide sequence ID" value="XM_017024957.2"/>
</dbReference>
<dbReference type="RefSeq" id="XP_016880447.1">
    <molecule id="P34896-2"/>
    <property type="nucleotide sequence ID" value="XM_017024958.2"/>
</dbReference>
<dbReference type="RefSeq" id="XP_024306655.1">
    <molecule id="P34896-3"/>
    <property type="nucleotide sequence ID" value="XM_024450887.2"/>
</dbReference>
<dbReference type="RefSeq" id="XP_047292501.1">
    <molecule id="P34896-2"/>
    <property type="nucleotide sequence ID" value="XM_047436545.1"/>
</dbReference>
<dbReference type="RefSeq" id="XP_054172909.1">
    <molecule id="P34896-1"/>
    <property type="nucleotide sequence ID" value="XM_054316934.1"/>
</dbReference>
<dbReference type="RefSeq" id="XP_054172910.1">
    <molecule id="P34896-1"/>
    <property type="nucleotide sequence ID" value="XM_054316935.1"/>
</dbReference>
<dbReference type="RefSeq" id="XP_054172911.1">
    <molecule id="P34896-2"/>
    <property type="nucleotide sequence ID" value="XM_054316936.1"/>
</dbReference>
<dbReference type="RefSeq" id="XP_054172912.1">
    <molecule id="P34896-2"/>
    <property type="nucleotide sequence ID" value="XM_054316937.1"/>
</dbReference>
<dbReference type="RefSeq" id="XP_054172913.1">
    <molecule id="P34896-3"/>
    <property type="nucleotide sequence ID" value="XM_054316938.1"/>
</dbReference>
<dbReference type="RefSeq" id="XP_054172914.1">
    <molecule id="P34896-3"/>
    <property type="nucleotide sequence ID" value="XM_054316939.1"/>
</dbReference>
<dbReference type="RefSeq" id="XP_054188074.1">
    <molecule id="P34896-1"/>
    <property type="nucleotide sequence ID" value="XM_054332099.1"/>
</dbReference>
<dbReference type="RefSeq" id="XP_054188075.1">
    <molecule id="P34896-1"/>
    <property type="nucleotide sequence ID" value="XM_054332100.1"/>
</dbReference>
<dbReference type="RefSeq" id="XP_054188076.1">
    <molecule id="P34896-2"/>
    <property type="nucleotide sequence ID" value="XM_054332101.1"/>
</dbReference>
<dbReference type="RefSeq" id="XP_054188077.1">
    <molecule id="P34896-2"/>
    <property type="nucleotide sequence ID" value="XM_054332102.1"/>
</dbReference>
<dbReference type="RefSeq" id="XP_054188078.1">
    <molecule id="P34896-3"/>
    <property type="nucleotide sequence ID" value="XM_054332103.1"/>
</dbReference>
<dbReference type="RefSeq" id="XP_054188079.1">
    <molecule id="P34896-3"/>
    <property type="nucleotide sequence ID" value="XM_054332104.1"/>
</dbReference>
<dbReference type="PDB" id="1BJ4">
    <property type="method" value="X-ray"/>
    <property type="resolution" value="2.65 A"/>
    <property type="chains" value="A=11-480"/>
</dbReference>
<dbReference type="PDB" id="6FL5">
    <property type="method" value="X-ray"/>
    <property type="resolution" value="3.60 A"/>
    <property type="chains" value="A/D/G/J=11-481"/>
</dbReference>
<dbReference type="PDB" id="6M5W">
    <property type="method" value="X-ray"/>
    <property type="resolution" value="3.10 A"/>
    <property type="chains" value="A=1-483"/>
</dbReference>
<dbReference type="PDB" id="7RJL">
    <property type="method" value="X-ray"/>
    <property type="resolution" value="1.50 A"/>
    <property type="chains" value="C/D=270-275"/>
</dbReference>
<dbReference type="PDB" id="7RJP">
    <property type="method" value="X-ray"/>
    <property type="resolution" value="1.25 A"/>
    <property type="chains" value="B=270-275"/>
</dbReference>
<dbReference type="PDB" id="8A11">
    <property type="method" value="EM"/>
    <property type="resolution" value="3.52 A"/>
    <property type="chains" value="A/B/C/D=1-483"/>
</dbReference>
<dbReference type="PDB" id="8R7H">
    <property type="method" value="EM"/>
    <property type="resolution" value="3.29 A"/>
    <property type="chains" value="A/B/C/D=1-483"/>
</dbReference>
<dbReference type="PDBsum" id="1BJ4"/>
<dbReference type="PDBsum" id="6FL5"/>
<dbReference type="PDBsum" id="6M5W"/>
<dbReference type="PDBsum" id="7RJL"/>
<dbReference type="PDBsum" id="7RJP"/>
<dbReference type="PDBsum" id="8A11"/>
<dbReference type="PDBsum" id="8R7H"/>
<dbReference type="EMDB" id="EMD-15065"/>
<dbReference type="EMDB" id="EMD-18973"/>
<dbReference type="SMR" id="P34896"/>
<dbReference type="BioGRID" id="112366">
    <property type="interactions" value="91"/>
</dbReference>
<dbReference type="CORUM" id="P34896"/>
<dbReference type="FunCoup" id="P34896">
    <property type="interactions" value="2021"/>
</dbReference>
<dbReference type="IntAct" id="P34896">
    <property type="interactions" value="33"/>
</dbReference>
<dbReference type="MINT" id="P34896"/>
<dbReference type="STRING" id="9606.ENSP00000318868"/>
<dbReference type="BindingDB" id="P34896"/>
<dbReference type="ChEMBL" id="CHEMBL1772927"/>
<dbReference type="DrugBank" id="DB02800">
    <property type="generic name" value="5-hydroxymethyl-5,6-dihydrofolic acid"/>
</dbReference>
<dbReference type="DrugBank" id="DB00145">
    <property type="generic name" value="Glycine"/>
</dbReference>
<dbReference type="DrugBank" id="DB01055">
    <property type="generic name" value="Mimosine"/>
</dbReference>
<dbReference type="DrugBank" id="DB02824">
    <property type="generic name" value="N-Pyridoxyl-Glycine-5-Monophosphate"/>
</dbReference>
<dbReference type="DrugBank" id="DB00114">
    <property type="generic name" value="Pyridoxal phosphate"/>
</dbReference>
<dbReference type="DrugBank" id="DB00116">
    <property type="generic name" value="Tetrahydrofolic acid"/>
</dbReference>
<dbReference type="DrugBank" id="DB02067">
    <property type="generic name" value="Triglu-5-formyl-tetrahydrofolate"/>
</dbReference>
<dbReference type="DrugCentral" id="P34896"/>
<dbReference type="MoonProt" id="P34896"/>
<dbReference type="iPTMnet" id="P34896"/>
<dbReference type="PhosphoSitePlus" id="P34896"/>
<dbReference type="SwissPalm" id="P34896"/>
<dbReference type="BioMuta" id="SHMT1"/>
<dbReference type="DMDM" id="462184"/>
<dbReference type="jPOST" id="P34896"/>
<dbReference type="MassIVE" id="P34896"/>
<dbReference type="PaxDb" id="9606-ENSP00000318868"/>
<dbReference type="PeptideAtlas" id="P34896"/>
<dbReference type="ProteomicsDB" id="4797"/>
<dbReference type="ProteomicsDB" id="54945">
    <molecule id="P34896-1"/>
</dbReference>
<dbReference type="ProteomicsDB" id="54946">
    <molecule id="P34896-2"/>
</dbReference>
<dbReference type="ProteomicsDB" id="54947">
    <molecule id="P34896-3"/>
</dbReference>
<dbReference type="Pumba" id="P34896"/>
<dbReference type="Antibodypedia" id="13529">
    <property type="antibodies" value="282 antibodies from 34 providers"/>
</dbReference>
<dbReference type="DNASU" id="6470"/>
<dbReference type="Ensembl" id="ENST00000316694.8">
    <molecule id="P34896-1"/>
    <property type="protein sequence ID" value="ENSP00000318868.3"/>
    <property type="gene ID" value="ENSG00000176974.22"/>
</dbReference>
<dbReference type="Ensembl" id="ENST00000354098.7">
    <molecule id="P34896-2"/>
    <property type="protein sequence ID" value="ENSP00000318805.3"/>
    <property type="gene ID" value="ENSG00000176974.22"/>
</dbReference>
<dbReference type="Ensembl" id="ENST00000583780.2">
    <molecule id="P34896-1"/>
    <property type="protein sequence ID" value="ENSP00000462041.2"/>
    <property type="gene ID" value="ENSG00000176974.22"/>
</dbReference>
<dbReference type="Ensembl" id="ENST00000640392.2">
    <molecule id="P34896-1"/>
    <property type="protein sequence ID" value="ENSP00000492715.2"/>
    <property type="gene ID" value="ENSG00000284320.4"/>
</dbReference>
<dbReference type="Ensembl" id="ENST00000711529.1">
    <molecule id="P34896-1"/>
    <property type="protein sequence ID" value="ENSP00000518786.1"/>
    <property type="gene ID" value="ENSG00000284320.4"/>
</dbReference>
<dbReference type="Ensembl" id="ENST00000711531.1">
    <molecule id="P34896-2"/>
    <property type="protein sequence ID" value="ENSP00000518788.1"/>
    <property type="gene ID" value="ENSG00000284320.4"/>
</dbReference>
<dbReference type="GeneID" id="6470"/>
<dbReference type="KEGG" id="hsa:6470"/>
<dbReference type="MANE-Select" id="ENST00000316694.8">
    <property type="protein sequence ID" value="ENSP00000318868.3"/>
    <property type="RefSeq nucleotide sequence ID" value="NM_004169.5"/>
    <property type="RefSeq protein sequence ID" value="NP_004160.3"/>
</dbReference>
<dbReference type="UCSC" id="uc002gta.5">
    <molecule id="P34896-1"/>
    <property type="organism name" value="human"/>
</dbReference>
<dbReference type="AGR" id="HGNC:10850"/>
<dbReference type="CTD" id="6470"/>
<dbReference type="DisGeNET" id="6470"/>
<dbReference type="GeneCards" id="SHMT1"/>
<dbReference type="HGNC" id="HGNC:10850">
    <property type="gene designation" value="SHMT1"/>
</dbReference>
<dbReference type="HPA" id="ENSG00000176974">
    <property type="expression patterns" value="Tissue enhanced (kidney, liver)"/>
</dbReference>
<dbReference type="MalaCards" id="SHMT1"/>
<dbReference type="MIM" id="182144">
    <property type="type" value="gene"/>
</dbReference>
<dbReference type="neXtProt" id="NX_P34896"/>
<dbReference type="OpenTargets" id="ENSG00000176974"/>
<dbReference type="PharmGKB" id="PA35753"/>
<dbReference type="VEuPathDB" id="HostDB:ENSG00000176974"/>
<dbReference type="eggNOG" id="KOG2467">
    <property type="taxonomic scope" value="Eukaryota"/>
</dbReference>
<dbReference type="GeneTree" id="ENSGT00390000002762"/>
<dbReference type="HOGENOM" id="CLU_022477_0_0_1"/>
<dbReference type="InParanoid" id="P34896"/>
<dbReference type="OMA" id="ANASVMH"/>
<dbReference type="OrthoDB" id="10265628at2759"/>
<dbReference type="PAN-GO" id="P34896">
    <property type="GO annotations" value="17 GO annotations based on evolutionary models"/>
</dbReference>
<dbReference type="PhylomeDB" id="P34896"/>
<dbReference type="TreeFam" id="TF314667"/>
<dbReference type="BioCyc" id="MetaCyc:HS11114-MONOMER"/>
<dbReference type="BRENDA" id="2.1.2.1">
    <property type="organism ID" value="2681"/>
</dbReference>
<dbReference type="PathwayCommons" id="P34896"/>
<dbReference type="Reactome" id="R-HSA-196757">
    <property type="pathway name" value="Metabolism of folate and pterines"/>
</dbReference>
<dbReference type="Reactome" id="R-HSA-71262">
    <property type="pathway name" value="Carnitine synthesis"/>
</dbReference>
<dbReference type="SABIO-RK" id="P34896"/>
<dbReference type="SignaLink" id="P34896"/>
<dbReference type="SIGNOR" id="P34896"/>
<dbReference type="UniPathway" id="UPA00193"/>
<dbReference type="BioGRID-ORCS" id="6470">
    <property type="hits" value="16 hits in 1172 CRISPR screens"/>
</dbReference>
<dbReference type="CD-CODE" id="91857CE7">
    <property type="entry name" value="Nucleolus"/>
</dbReference>
<dbReference type="ChiTaRS" id="SHMT1">
    <property type="organism name" value="human"/>
</dbReference>
<dbReference type="EvolutionaryTrace" id="P34896"/>
<dbReference type="GenomeRNAi" id="6470"/>
<dbReference type="Pharos" id="P34896">
    <property type="development level" value="Tbio"/>
</dbReference>
<dbReference type="PRO" id="PR:P34896"/>
<dbReference type="Proteomes" id="UP000005640">
    <property type="component" value="Chromosome 17"/>
</dbReference>
<dbReference type="RNAct" id="P34896">
    <property type="molecule type" value="protein"/>
</dbReference>
<dbReference type="Bgee" id="ENSG00000176974">
    <property type="expression patterns" value="Expressed in right lobe of liver and 102 other cell types or tissues"/>
</dbReference>
<dbReference type="ExpressionAtlas" id="P34896">
    <property type="expression patterns" value="baseline and differential"/>
</dbReference>
<dbReference type="GO" id="GO:0005737">
    <property type="term" value="C:cytoplasm"/>
    <property type="evidence" value="ECO:0000318"/>
    <property type="project" value="GO_Central"/>
</dbReference>
<dbReference type="GO" id="GO:0005829">
    <property type="term" value="C:cytosol"/>
    <property type="evidence" value="ECO:0000314"/>
    <property type="project" value="HPA"/>
</dbReference>
<dbReference type="GO" id="GO:0070062">
    <property type="term" value="C:extracellular exosome"/>
    <property type="evidence" value="ECO:0007005"/>
    <property type="project" value="UniProtKB"/>
</dbReference>
<dbReference type="GO" id="GO:0005739">
    <property type="term" value="C:mitochondrion"/>
    <property type="evidence" value="ECO:0000318"/>
    <property type="project" value="GO_Central"/>
</dbReference>
<dbReference type="GO" id="GO:0005654">
    <property type="term" value="C:nucleoplasm"/>
    <property type="evidence" value="ECO:0000314"/>
    <property type="project" value="HPA"/>
</dbReference>
<dbReference type="GO" id="GO:0005634">
    <property type="term" value="C:nucleus"/>
    <property type="evidence" value="ECO:0000318"/>
    <property type="project" value="GO_Central"/>
</dbReference>
<dbReference type="GO" id="GO:0016832">
    <property type="term" value="F:aldehyde-lyase activity"/>
    <property type="evidence" value="ECO:0000269"/>
    <property type="project" value="Reactome"/>
</dbReference>
<dbReference type="GO" id="GO:0004372">
    <property type="term" value="F:glycine hydroxymethyltransferase activity"/>
    <property type="evidence" value="ECO:0000314"/>
    <property type="project" value="UniProtKB"/>
</dbReference>
<dbReference type="GO" id="GO:0042802">
    <property type="term" value="F:identical protein binding"/>
    <property type="evidence" value="ECO:0000353"/>
    <property type="project" value="IntAct"/>
</dbReference>
<dbReference type="GO" id="GO:0048027">
    <property type="term" value="F:mRNA 5'-UTR binding"/>
    <property type="evidence" value="ECO:0000314"/>
    <property type="project" value="CAFA"/>
</dbReference>
<dbReference type="GO" id="GO:0000900">
    <property type="term" value="F:mRNA regulatory element binding translation repressor activity"/>
    <property type="evidence" value="ECO:0000314"/>
    <property type="project" value="CAFA"/>
</dbReference>
<dbReference type="GO" id="GO:0042803">
    <property type="term" value="F:protein homodimerization activity"/>
    <property type="evidence" value="ECO:0000314"/>
    <property type="project" value="UniProtKB"/>
</dbReference>
<dbReference type="GO" id="GO:0030170">
    <property type="term" value="F:pyridoxal phosphate binding"/>
    <property type="evidence" value="ECO:0000314"/>
    <property type="project" value="UniProtKB"/>
</dbReference>
<dbReference type="GO" id="GO:0070905">
    <property type="term" value="F:serine binding"/>
    <property type="evidence" value="ECO:0000314"/>
    <property type="project" value="BHF-UCL"/>
</dbReference>
<dbReference type="GO" id="GO:0036094">
    <property type="term" value="F:small molecule binding"/>
    <property type="evidence" value="ECO:0000353"/>
    <property type="project" value="BHF-UCL"/>
</dbReference>
<dbReference type="GO" id="GO:0045329">
    <property type="term" value="P:carnitine biosynthetic process"/>
    <property type="evidence" value="ECO:0000304"/>
    <property type="project" value="Reactome"/>
</dbReference>
<dbReference type="GO" id="GO:1990830">
    <property type="term" value="P:cellular response to leukemia inhibitory factor"/>
    <property type="evidence" value="ECO:0007669"/>
    <property type="project" value="Ensembl"/>
</dbReference>
<dbReference type="GO" id="GO:1904482">
    <property type="term" value="P:cellular response to tetrahydrofolate"/>
    <property type="evidence" value="ECO:0000314"/>
    <property type="project" value="BHF-UCL"/>
</dbReference>
<dbReference type="GO" id="GO:0006231">
    <property type="term" value="P:dTMP biosynthetic process"/>
    <property type="evidence" value="ECO:0007669"/>
    <property type="project" value="Ensembl"/>
</dbReference>
<dbReference type="GO" id="GO:0046655">
    <property type="term" value="P:folic acid metabolic process"/>
    <property type="evidence" value="ECO:0000314"/>
    <property type="project" value="UniProtKB"/>
</dbReference>
<dbReference type="GO" id="GO:0019264">
    <property type="term" value="P:glycine biosynthetic process from serine"/>
    <property type="evidence" value="ECO:0000318"/>
    <property type="project" value="GO_Central"/>
</dbReference>
<dbReference type="GO" id="GO:0006544">
    <property type="term" value="P:glycine metabolic process"/>
    <property type="evidence" value="ECO:0000314"/>
    <property type="project" value="UniProtKB"/>
</dbReference>
<dbReference type="GO" id="GO:0006565">
    <property type="term" value="P:L-serine catabolic process"/>
    <property type="evidence" value="ECO:0000314"/>
    <property type="project" value="UniProtKB"/>
</dbReference>
<dbReference type="GO" id="GO:0006563">
    <property type="term" value="P:L-serine metabolic process"/>
    <property type="evidence" value="ECO:0000314"/>
    <property type="project" value="UniProtKB"/>
</dbReference>
<dbReference type="GO" id="GO:0017148">
    <property type="term" value="P:negative regulation of translation"/>
    <property type="evidence" value="ECO:0000314"/>
    <property type="project" value="CAFA"/>
</dbReference>
<dbReference type="GO" id="GO:0051289">
    <property type="term" value="P:protein homotetramerization"/>
    <property type="evidence" value="ECO:0000314"/>
    <property type="project" value="UniProtKB"/>
</dbReference>
<dbReference type="GO" id="GO:0009113">
    <property type="term" value="P:purine nucleobase biosynthetic process"/>
    <property type="evidence" value="ECO:0000314"/>
    <property type="project" value="UniProtKB"/>
</dbReference>
<dbReference type="GO" id="GO:0035999">
    <property type="term" value="P:tetrahydrofolate interconversion"/>
    <property type="evidence" value="ECO:0000314"/>
    <property type="project" value="BHF-UCL"/>
</dbReference>
<dbReference type="GO" id="GO:0046653">
    <property type="term" value="P:tetrahydrofolate metabolic process"/>
    <property type="evidence" value="ECO:0000314"/>
    <property type="project" value="UniProtKB"/>
</dbReference>
<dbReference type="CDD" id="cd00378">
    <property type="entry name" value="SHMT"/>
    <property type="match status" value="1"/>
</dbReference>
<dbReference type="FunFam" id="3.40.640.10:FF:000097">
    <property type="entry name" value="Serine hydroxymethyltransferase"/>
    <property type="match status" value="1"/>
</dbReference>
<dbReference type="FunFam" id="3.90.1150.10:FF:000005">
    <property type="entry name" value="Serine hydroxymethyltransferase"/>
    <property type="match status" value="1"/>
</dbReference>
<dbReference type="FunFam" id="3.90.1150.10:FF:000048">
    <property type="entry name" value="Serine hydroxymethyltransferase, mitochondrial"/>
    <property type="match status" value="1"/>
</dbReference>
<dbReference type="Gene3D" id="3.90.1150.10">
    <property type="entry name" value="Aspartate Aminotransferase, domain 1"/>
    <property type="match status" value="1"/>
</dbReference>
<dbReference type="Gene3D" id="3.40.640.10">
    <property type="entry name" value="Type I PLP-dependent aspartate aminotransferase-like (Major domain)"/>
    <property type="match status" value="1"/>
</dbReference>
<dbReference type="HAMAP" id="MF_00051">
    <property type="entry name" value="SHMT"/>
    <property type="match status" value="1"/>
</dbReference>
<dbReference type="InterPro" id="IPR015424">
    <property type="entry name" value="PyrdxlP-dep_Trfase"/>
</dbReference>
<dbReference type="InterPro" id="IPR015421">
    <property type="entry name" value="PyrdxlP-dep_Trfase_major"/>
</dbReference>
<dbReference type="InterPro" id="IPR015422">
    <property type="entry name" value="PyrdxlP-dep_Trfase_small"/>
</dbReference>
<dbReference type="InterPro" id="IPR001085">
    <property type="entry name" value="Ser_HO-MeTrfase"/>
</dbReference>
<dbReference type="InterPro" id="IPR049943">
    <property type="entry name" value="Ser_HO-MeTrfase-like"/>
</dbReference>
<dbReference type="InterPro" id="IPR019798">
    <property type="entry name" value="Ser_HO-MeTrfase_PLP_BS"/>
</dbReference>
<dbReference type="InterPro" id="IPR039429">
    <property type="entry name" value="SHMT-like_dom"/>
</dbReference>
<dbReference type="NCBIfam" id="NF000586">
    <property type="entry name" value="PRK00011.1"/>
    <property type="match status" value="1"/>
</dbReference>
<dbReference type="PANTHER" id="PTHR11680">
    <property type="entry name" value="SERINE HYDROXYMETHYLTRANSFERASE"/>
    <property type="match status" value="1"/>
</dbReference>
<dbReference type="PANTHER" id="PTHR11680:SF59">
    <property type="entry name" value="SERINE HYDROXYMETHYLTRANSFERASE, CYTOSOLIC"/>
    <property type="match status" value="1"/>
</dbReference>
<dbReference type="Pfam" id="PF00464">
    <property type="entry name" value="SHMT"/>
    <property type="match status" value="1"/>
</dbReference>
<dbReference type="PIRSF" id="PIRSF000412">
    <property type="entry name" value="SHMT"/>
    <property type="match status" value="1"/>
</dbReference>
<dbReference type="SUPFAM" id="SSF53383">
    <property type="entry name" value="PLP-dependent transferases"/>
    <property type="match status" value="1"/>
</dbReference>
<dbReference type="PROSITE" id="PS00096">
    <property type="entry name" value="SHMT"/>
    <property type="match status" value="1"/>
</dbReference>
<sequence>MTMPVNGAHKDADLWSSHDKMLAQPLKDSDVEVYNIIKKESNRQRVGLELIASENFASRAVLEALGSCLNNKYSEGYPGQRYYGGTEFIDELETLCQKRALQAYKLDPQCWGVNVQPYSGSPANFAVYTALVEPHGRIMGLDLPDGGHLTHGFMTDKKKISATSIFFESMPYKVNPDTGYINYDQLEENARLFHPKLIIAGTSCYSRNLEYARLRKIADENGAYLMADMAHISGLVAAGVVPSPFEHCHVVTTTTHKTLRGCRAGMIFYRKGVKSVDPKTGKEILYNLESLINSAVFPGLQGGPHNHAIAGVAVALKQAMTLEFKVYQHQVVANCRALSEALTELGYKIVTGGSDNHLILVDLRSKGTDGGRAEKVLEACSIACNKNTCPGDRSALRPSGLRLGTPALTSRGLLEKDFQKVAHFIHRGIELTLQIQSDTGVRATLKEFKERLAGDKYQAAVQALREEVESFASLFPLPGLPDF</sequence>
<proteinExistence type="evidence at protein level"/>
<organism>
    <name type="scientific">Homo sapiens</name>
    <name type="common">Human</name>
    <dbReference type="NCBI Taxonomy" id="9606"/>
    <lineage>
        <taxon>Eukaryota</taxon>
        <taxon>Metazoa</taxon>
        <taxon>Chordata</taxon>
        <taxon>Craniata</taxon>
        <taxon>Vertebrata</taxon>
        <taxon>Euteleostomi</taxon>
        <taxon>Mammalia</taxon>
        <taxon>Eutheria</taxon>
        <taxon>Euarchontoglires</taxon>
        <taxon>Primates</taxon>
        <taxon>Haplorrhini</taxon>
        <taxon>Catarrhini</taxon>
        <taxon>Hominidae</taxon>
        <taxon>Homo</taxon>
    </lineage>
</organism>
<keyword id="KW-0002">3D-structure</keyword>
<keyword id="KW-0007">Acetylation</keyword>
<keyword id="KW-0025">Alternative splicing</keyword>
<keyword id="KW-0963">Cytoplasm</keyword>
<keyword id="KW-0554">One-carbon metabolism</keyword>
<keyword id="KW-1267">Proteomics identification</keyword>
<keyword id="KW-0663">Pyridoxal phosphate</keyword>
<keyword id="KW-1185">Reference proteome</keyword>
<keyword id="KW-0808">Transferase</keyword>
<name>GLYC_HUMAN</name>
<comment type="function">
    <text evidence="3 5">Interconversion of serine and glycine (PubMed:24698160, PubMed:8505317).</text>
</comment>
<comment type="catalytic activity">
    <reaction evidence="3 5">
        <text>(6R)-5,10-methylene-5,6,7,8-tetrahydrofolate + glycine + H2O = (6S)-5,6,7,8-tetrahydrofolate + L-serine</text>
        <dbReference type="Rhea" id="RHEA:15481"/>
        <dbReference type="ChEBI" id="CHEBI:15377"/>
        <dbReference type="ChEBI" id="CHEBI:15636"/>
        <dbReference type="ChEBI" id="CHEBI:33384"/>
        <dbReference type="ChEBI" id="CHEBI:57305"/>
        <dbReference type="ChEBI" id="CHEBI:57453"/>
        <dbReference type="EC" id="2.1.2.1"/>
    </reaction>
</comment>
<comment type="cofactor">
    <cofactor evidence="3 4 6">
        <name>pyridoxal 5'-phosphate</name>
        <dbReference type="ChEBI" id="CHEBI:597326"/>
    </cofactor>
</comment>
<comment type="activity regulation">
    <text evidence="3">Inhibited by tetrahydrofolate concentrations above 40 uM.</text>
</comment>
<comment type="biophysicochemical properties">
    <kinetics>
        <KM evidence="3">0.18 mM for L-serine</KM>
        <KM evidence="3">5.2 uM for tetrahydrofolate</KM>
    </kinetics>
</comment>
<comment type="pathway">
    <text evidence="11">One-carbon metabolism; tetrahydrofolate interconversion.</text>
</comment>
<comment type="subunit">
    <text evidence="2 3 4 6">Homotetramer (PubMed:24698160, PubMed:25619277, PubMed:9753690). Identified in complex with ABRAXAS2 and the other subunits of the BRISC complex, at least composed of ABRAXAS2, BRCC3/BRCC36, BABAM2 and BABAM1/NBA1 (PubMed:24075985).</text>
</comment>
<comment type="interaction">
    <interactant intactId="EBI-715117">
        <id>P34896</id>
    </interactant>
    <interactant intactId="EBI-351257">
        <id>P26196</id>
        <label>DDX6</label>
    </interactant>
    <organismsDiffer>false</organismsDiffer>
    <experiments>3</experiments>
</comment>
<comment type="interaction">
    <interactant intactId="EBI-715117">
        <id>P34896</id>
    </interactant>
    <interactant intactId="EBI-739467">
        <id>Q9H8Y8</id>
        <label>GORASP2</label>
    </interactant>
    <organismsDiffer>false</organismsDiffer>
    <experiments>3</experiments>
</comment>
<comment type="interaction">
    <interactant intactId="EBI-715117">
        <id>P34896</id>
    </interactant>
    <interactant intactId="EBI-355999">
        <id>P50213</id>
        <label>IDH3A</label>
    </interactant>
    <organismsDiffer>false</organismsDiffer>
    <experiments>6</experiments>
</comment>
<comment type="interaction">
    <interactant intactId="EBI-715117">
        <id>P34896</id>
    </interactant>
    <interactant intactId="EBI-713568">
        <id>P45984</id>
        <label>MAPK9</label>
    </interactant>
    <organismsDiffer>false</organismsDiffer>
    <experiments>7</experiments>
</comment>
<comment type="interaction">
    <interactant intactId="EBI-715117">
        <id>P34896</id>
    </interactant>
    <interactant intactId="EBI-724076">
        <id>Q99750</id>
        <label>MDFI</label>
    </interactant>
    <organismsDiffer>false</organismsDiffer>
    <experiments>3</experiments>
</comment>
<comment type="interaction">
    <interactant intactId="EBI-715117">
        <id>P34896</id>
    </interactant>
    <interactant intactId="EBI-715117">
        <id>P34896</id>
        <label>SHMT1</label>
    </interactant>
    <organismsDiffer>false</organismsDiffer>
    <experiments>4</experiments>
</comment>
<comment type="interaction">
    <interactant intactId="EBI-715117">
        <id>P34896</id>
    </interactant>
    <interactant intactId="EBI-10196922">
        <id>P0DMN0</id>
        <label>SULT1A4</label>
    </interactant>
    <organismsDiffer>false</organismsDiffer>
    <experiments>3</experiments>
</comment>
<comment type="subcellular location">
    <subcellularLocation>
        <location>Cytoplasm</location>
    </subcellularLocation>
</comment>
<comment type="alternative products">
    <event type="alternative splicing"/>
    <isoform>
        <id>P34896-1</id>
        <name>1</name>
        <sequence type="displayed"/>
    </isoform>
    <isoform>
        <id>P34896-2</id>
        <name>2</name>
        <sequence type="described" ref="VSP_006095"/>
    </isoform>
    <isoform>
        <id>P34896-3</id>
        <name>3</name>
        <sequence type="described" ref="VSP_006096"/>
    </isoform>
    <isoform>
        <id>P34896-4</id>
        <name>4</name>
        <sequence type="described" ref="VSP_054610"/>
    </isoform>
</comment>
<comment type="miscellaneous">
    <text evidence="10">In eukaryotes there are two forms of the enzymes: a cytosolic one and a mitochondrial one.</text>
</comment>
<comment type="similarity">
    <text evidence="10">Belongs to the SHMT family.</text>
</comment>
<reference key="1">
    <citation type="journal article" date="1993" name="J. Biol. Chem.">
        <title>Cloning of human cDNAs encoding mitochondrial and cytosolic serine hydroxymethyltransferases and chromosomal localization.</title>
        <authorList>
            <person name="Garrow T.A."/>
            <person name="Brenner A.A."/>
            <person name="Whitehead M.V."/>
            <person name="Chen X.-N."/>
            <person name="Duncan R.G."/>
            <person name="Korenberg J.R."/>
            <person name="Shane B."/>
        </authorList>
    </citation>
    <scope>NUCLEOTIDE SEQUENCE [MRNA]</scope>
    <scope>FUNCTION</scope>
    <scope>CATALYTIC ACTIVITY</scope>
</reference>
<reference key="2">
    <citation type="submission" date="1994-01" db="EMBL/GenBank/DDBJ databases">
        <authorList>
            <person name="Xu L."/>
            <person name="Mangum J.H."/>
            <person name="Robertson D.L."/>
        </authorList>
    </citation>
    <scope>NUCLEOTIDE SEQUENCE [MRNA]</scope>
    <source>
        <tissue>Liver</tissue>
    </source>
</reference>
<reference key="3">
    <citation type="journal article" date="1997" name="Biochem. Soc. Trans.">
        <title>Isolation and characterisation of human genomic sequences encoding cytosolic serine hydroxymethyltransferase.</title>
        <authorList>
            <person name="Chave K.J."/>
            <person name="Snell K."/>
            <person name="Sanders P.G."/>
        </authorList>
    </citation>
    <scope>NUCLEOTIDE SEQUENCE [MRNA]</scope>
    <source>
        <tissue>Mammary gland</tissue>
    </source>
</reference>
<reference key="4">
    <citation type="journal article" date="2004" name="Nat. Genet.">
        <title>Complete sequencing and characterization of 21,243 full-length human cDNAs.</title>
        <authorList>
            <person name="Ota T."/>
            <person name="Suzuki Y."/>
            <person name="Nishikawa T."/>
            <person name="Otsuki T."/>
            <person name="Sugiyama T."/>
            <person name="Irie R."/>
            <person name="Wakamatsu A."/>
            <person name="Hayashi K."/>
            <person name="Sato H."/>
            <person name="Nagai K."/>
            <person name="Kimura K."/>
            <person name="Makita H."/>
            <person name="Sekine M."/>
            <person name="Obayashi M."/>
            <person name="Nishi T."/>
            <person name="Shibahara T."/>
            <person name="Tanaka T."/>
            <person name="Ishii S."/>
            <person name="Yamamoto J."/>
            <person name="Saito K."/>
            <person name="Kawai Y."/>
            <person name="Isono Y."/>
            <person name="Nakamura Y."/>
            <person name="Nagahari K."/>
            <person name="Murakami K."/>
            <person name="Yasuda T."/>
            <person name="Iwayanagi T."/>
            <person name="Wagatsuma M."/>
            <person name="Shiratori A."/>
            <person name="Sudo H."/>
            <person name="Hosoiri T."/>
            <person name="Kaku Y."/>
            <person name="Kodaira H."/>
            <person name="Kondo H."/>
            <person name="Sugawara M."/>
            <person name="Takahashi M."/>
            <person name="Kanda K."/>
            <person name="Yokoi T."/>
            <person name="Furuya T."/>
            <person name="Kikkawa E."/>
            <person name="Omura Y."/>
            <person name="Abe K."/>
            <person name="Kamihara K."/>
            <person name="Katsuta N."/>
            <person name="Sato K."/>
            <person name="Tanikawa M."/>
            <person name="Yamazaki M."/>
            <person name="Ninomiya K."/>
            <person name="Ishibashi T."/>
            <person name="Yamashita H."/>
            <person name="Murakawa K."/>
            <person name="Fujimori K."/>
            <person name="Tanai H."/>
            <person name="Kimata M."/>
            <person name="Watanabe M."/>
            <person name="Hiraoka S."/>
            <person name="Chiba Y."/>
            <person name="Ishida S."/>
            <person name="Ono Y."/>
            <person name="Takiguchi S."/>
            <person name="Watanabe S."/>
            <person name="Yosida M."/>
            <person name="Hotuta T."/>
            <person name="Kusano J."/>
            <person name="Kanehori K."/>
            <person name="Takahashi-Fujii A."/>
            <person name="Hara H."/>
            <person name="Tanase T.-O."/>
            <person name="Nomura Y."/>
            <person name="Togiya S."/>
            <person name="Komai F."/>
            <person name="Hara R."/>
            <person name="Takeuchi K."/>
            <person name="Arita M."/>
            <person name="Imose N."/>
            <person name="Musashino K."/>
            <person name="Yuuki H."/>
            <person name="Oshima A."/>
            <person name="Sasaki N."/>
            <person name="Aotsuka S."/>
            <person name="Yoshikawa Y."/>
            <person name="Matsunawa H."/>
            <person name="Ichihara T."/>
            <person name="Shiohata N."/>
            <person name="Sano S."/>
            <person name="Moriya S."/>
            <person name="Momiyama H."/>
            <person name="Satoh N."/>
            <person name="Takami S."/>
            <person name="Terashima Y."/>
            <person name="Suzuki O."/>
            <person name="Nakagawa S."/>
            <person name="Senoh A."/>
            <person name="Mizoguchi H."/>
            <person name="Goto Y."/>
            <person name="Shimizu F."/>
            <person name="Wakebe H."/>
            <person name="Hishigaki H."/>
            <person name="Watanabe T."/>
            <person name="Sugiyama A."/>
            <person name="Takemoto M."/>
            <person name="Kawakami B."/>
            <person name="Yamazaki M."/>
            <person name="Watanabe K."/>
            <person name="Kumagai A."/>
            <person name="Itakura S."/>
            <person name="Fukuzumi Y."/>
            <person name="Fujimori Y."/>
            <person name="Komiyama M."/>
            <person name="Tashiro H."/>
            <person name="Tanigami A."/>
            <person name="Fujiwara T."/>
            <person name="Ono T."/>
            <person name="Yamada K."/>
            <person name="Fujii Y."/>
            <person name="Ozaki K."/>
            <person name="Hirao M."/>
            <person name="Ohmori Y."/>
            <person name="Kawabata A."/>
            <person name="Hikiji T."/>
            <person name="Kobatake N."/>
            <person name="Inagaki H."/>
            <person name="Ikema Y."/>
            <person name="Okamoto S."/>
            <person name="Okitani R."/>
            <person name="Kawakami T."/>
            <person name="Noguchi S."/>
            <person name="Itoh T."/>
            <person name="Shigeta K."/>
            <person name="Senba T."/>
            <person name="Matsumura K."/>
            <person name="Nakajima Y."/>
            <person name="Mizuno T."/>
            <person name="Morinaga M."/>
            <person name="Sasaki M."/>
            <person name="Togashi T."/>
            <person name="Oyama M."/>
            <person name="Hata H."/>
            <person name="Watanabe M."/>
            <person name="Komatsu T."/>
            <person name="Mizushima-Sugano J."/>
            <person name="Satoh T."/>
            <person name="Shirai Y."/>
            <person name="Takahashi Y."/>
            <person name="Nakagawa K."/>
            <person name="Okumura K."/>
            <person name="Nagase T."/>
            <person name="Nomura N."/>
            <person name="Kikuchi H."/>
            <person name="Masuho Y."/>
            <person name="Yamashita R."/>
            <person name="Nakai K."/>
            <person name="Yada T."/>
            <person name="Nakamura Y."/>
            <person name="Ohara O."/>
            <person name="Isogai T."/>
            <person name="Sugano S."/>
        </authorList>
    </citation>
    <scope>NUCLEOTIDE SEQUENCE [LARGE SCALE MRNA] (ISOFORM 4)</scope>
    <source>
        <tissue>Liver</tissue>
    </source>
</reference>
<reference key="5">
    <citation type="journal article" date="2006" name="Nature">
        <title>DNA sequence of human chromosome 17 and analysis of rearrangement in the human lineage.</title>
        <authorList>
            <person name="Zody M.C."/>
            <person name="Garber M."/>
            <person name="Adams D.J."/>
            <person name="Sharpe T."/>
            <person name="Harrow J."/>
            <person name="Lupski J.R."/>
            <person name="Nicholson C."/>
            <person name="Searle S.M."/>
            <person name="Wilming L."/>
            <person name="Young S.K."/>
            <person name="Abouelleil A."/>
            <person name="Allen N.R."/>
            <person name="Bi W."/>
            <person name="Bloom T."/>
            <person name="Borowsky M.L."/>
            <person name="Bugalter B.E."/>
            <person name="Butler J."/>
            <person name="Chang J.L."/>
            <person name="Chen C.-K."/>
            <person name="Cook A."/>
            <person name="Corum B."/>
            <person name="Cuomo C.A."/>
            <person name="de Jong P.J."/>
            <person name="DeCaprio D."/>
            <person name="Dewar K."/>
            <person name="FitzGerald M."/>
            <person name="Gilbert J."/>
            <person name="Gibson R."/>
            <person name="Gnerre S."/>
            <person name="Goldstein S."/>
            <person name="Grafham D.V."/>
            <person name="Grocock R."/>
            <person name="Hafez N."/>
            <person name="Hagopian D.S."/>
            <person name="Hart E."/>
            <person name="Norman C.H."/>
            <person name="Humphray S."/>
            <person name="Jaffe D.B."/>
            <person name="Jones M."/>
            <person name="Kamal M."/>
            <person name="Khodiyar V.K."/>
            <person name="LaButti K."/>
            <person name="Laird G."/>
            <person name="Lehoczky J."/>
            <person name="Liu X."/>
            <person name="Lokyitsang T."/>
            <person name="Loveland J."/>
            <person name="Lui A."/>
            <person name="Macdonald P."/>
            <person name="Major J.E."/>
            <person name="Matthews L."/>
            <person name="Mauceli E."/>
            <person name="McCarroll S.A."/>
            <person name="Mihalev A.H."/>
            <person name="Mudge J."/>
            <person name="Nguyen C."/>
            <person name="Nicol R."/>
            <person name="O'Leary S.B."/>
            <person name="Osoegawa K."/>
            <person name="Schwartz D.C."/>
            <person name="Shaw-Smith C."/>
            <person name="Stankiewicz P."/>
            <person name="Steward C."/>
            <person name="Swarbreck D."/>
            <person name="Venkataraman V."/>
            <person name="Whittaker C.A."/>
            <person name="Yang X."/>
            <person name="Zimmer A.R."/>
            <person name="Bradley A."/>
            <person name="Hubbard T."/>
            <person name="Birren B.W."/>
            <person name="Rogers J."/>
            <person name="Lander E.S."/>
            <person name="Nusbaum C."/>
        </authorList>
    </citation>
    <scope>NUCLEOTIDE SEQUENCE [LARGE SCALE GENOMIC DNA]</scope>
</reference>
<reference key="6">
    <citation type="submission" date="2005-09" db="EMBL/GenBank/DDBJ databases">
        <authorList>
            <person name="Mural R.J."/>
            <person name="Istrail S."/>
            <person name="Sutton G.G."/>
            <person name="Florea L."/>
            <person name="Halpern A.L."/>
            <person name="Mobarry C.M."/>
            <person name="Lippert R."/>
            <person name="Walenz B."/>
            <person name="Shatkay H."/>
            <person name="Dew I."/>
            <person name="Miller J.R."/>
            <person name="Flanigan M.J."/>
            <person name="Edwards N.J."/>
            <person name="Bolanos R."/>
            <person name="Fasulo D."/>
            <person name="Halldorsson B.V."/>
            <person name="Hannenhalli S."/>
            <person name="Turner R."/>
            <person name="Yooseph S."/>
            <person name="Lu F."/>
            <person name="Nusskern D.R."/>
            <person name="Shue B.C."/>
            <person name="Zheng X.H."/>
            <person name="Zhong F."/>
            <person name="Delcher A.L."/>
            <person name="Huson D.H."/>
            <person name="Kravitz S.A."/>
            <person name="Mouchard L."/>
            <person name="Reinert K."/>
            <person name="Remington K.A."/>
            <person name="Clark A.G."/>
            <person name="Waterman M.S."/>
            <person name="Eichler E.E."/>
            <person name="Adams M.D."/>
            <person name="Hunkapiller M.W."/>
            <person name="Myers E.W."/>
            <person name="Venter J.C."/>
        </authorList>
    </citation>
    <scope>NUCLEOTIDE SEQUENCE [LARGE SCALE GENOMIC DNA]</scope>
    <scope>VARIANT PHE-474</scope>
</reference>
<reference key="7">
    <citation type="journal article" date="2004" name="Genome Res.">
        <title>The status, quality, and expansion of the NIH full-length cDNA project: the Mammalian Gene Collection (MGC).</title>
        <authorList>
            <consortium name="The MGC Project Team"/>
        </authorList>
    </citation>
    <scope>NUCLEOTIDE SEQUENCE [LARGE SCALE MRNA] (ISOFORMS 1 AND 2)</scope>
    <scope>VARIANT PHE-474</scope>
    <source>
        <tissue>Bone marrow</tissue>
        <tissue>Lymph</tissue>
        <tissue>Testis</tissue>
    </source>
</reference>
<reference key="8">
    <citation type="journal article" date="2009" name="Science">
        <title>Lysine acetylation targets protein complexes and co-regulates major cellular functions.</title>
        <authorList>
            <person name="Choudhary C."/>
            <person name="Kumar C."/>
            <person name="Gnad F."/>
            <person name="Nielsen M.L."/>
            <person name="Rehman M."/>
            <person name="Walther T.C."/>
            <person name="Olsen J.V."/>
            <person name="Mann M."/>
        </authorList>
    </citation>
    <scope>ACETYLATION [LARGE SCALE ANALYSIS] AT LYS-271 (ISOFORM 2)</scope>
    <scope>IDENTIFICATION BY MASS SPECTROMETRY [LARGE SCALE ANALYSIS]</scope>
</reference>
<reference key="9">
    <citation type="journal article" date="2011" name="BMC Syst. Biol.">
        <title>Initial characterization of the human central proteome.</title>
        <authorList>
            <person name="Burkard T.R."/>
            <person name="Planyavsky M."/>
            <person name="Kaupe I."/>
            <person name="Breitwieser F.P."/>
            <person name="Buerckstuemmer T."/>
            <person name="Bennett K.L."/>
            <person name="Superti-Furga G."/>
            <person name="Colinge J."/>
        </authorList>
    </citation>
    <scope>IDENTIFICATION BY MASS SPECTROMETRY [LARGE SCALE ANALYSIS]</scope>
</reference>
<reference key="10">
    <citation type="journal article" date="2013" name="Cell Rep.">
        <title>A BRISC-SHMT complex deubiquitinates IFNAR1 and regulates interferon responses.</title>
        <authorList>
            <person name="Zheng H."/>
            <person name="Gupta V."/>
            <person name="Patterson-Fortin J."/>
            <person name="Bhattacharya S."/>
            <person name="Katlinski K."/>
            <person name="Wu J."/>
            <person name="Varghese B."/>
            <person name="Carbone C.J."/>
            <person name="Aressy B."/>
            <person name="Fuchs S.Y."/>
            <person name="Greenberg R.A."/>
        </authorList>
    </citation>
    <scope>IDENTIFICATION BY MASS SPECTROMETRY</scope>
    <scope>IDENTIFICATION IN THE BRISC COMPLEX</scope>
    <scope>INTERACTION WITH ABRAXAS2</scope>
</reference>
<reference key="11">
    <citation type="journal article" date="2014" name="FEBS J.">
        <title>Distinct biochemical properties of human serine hydroxymethyltransferase compared with the Plasmodium enzyme: implications for selective inhibition.</title>
        <authorList>
            <person name="Pinthong C."/>
            <person name="Maenpuen S."/>
            <person name="Amornwatcharapong W."/>
            <person name="Yuthavong Y."/>
            <person name="Leartsakulpanich U."/>
            <person name="Chaiyen P."/>
        </authorList>
    </citation>
    <scope>FUNCTION</scope>
    <scope>CATALYTIC ACTIVITY</scope>
    <scope>BIOPHYSICOCHEMICAL PROPERTIES</scope>
    <scope>ACTIVITY REGULATION</scope>
    <scope>SUBUNIT</scope>
    <scope>COFACTOR</scope>
</reference>
<reference key="12">
    <citation type="journal article" date="2014" name="J. Proteomics">
        <title>An enzyme assisted RP-RPLC approach for in-depth analysis of human liver phosphoproteome.</title>
        <authorList>
            <person name="Bian Y."/>
            <person name="Song C."/>
            <person name="Cheng K."/>
            <person name="Dong M."/>
            <person name="Wang F."/>
            <person name="Huang J."/>
            <person name="Sun D."/>
            <person name="Wang L."/>
            <person name="Ye M."/>
            <person name="Zou H."/>
        </authorList>
    </citation>
    <scope>IDENTIFICATION BY MASS SPECTROMETRY [LARGE SCALE ANALYSIS]</scope>
    <source>
        <tissue>Liver</tissue>
    </source>
</reference>
<reference key="13">
    <citation type="journal article" date="2015" name="FEBS J.">
        <title>How pyridoxal 5'-phosphate differentially regulates human cytosolic and mitochondrial serine hydroxymethyltransferase oligomeric state.</title>
        <authorList>
            <person name="Giardina G."/>
            <person name="Brunotti P."/>
            <person name="Fiascarelli A."/>
            <person name="Cicalini A."/>
            <person name="Costa M.G."/>
            <person name="Buckle A.M."/>
            <person name="di Salvo M.L."/>
            <person name="Giorgi A."/>
            <person name="Marani M."/>
            <person name="Paone A."/>
            <person name="Rinaldo S."/>
            <person name="Paiardini A."/>
            <person name="Contestabile R."/>
            <person name="Cutruzzola F."/>
        </authorList>
    </citation>
    <scope>SUBUNIT</scope>
    <scope>COFACTOR</scope>
</reference>
<reference key="14">
    <citation type="journal article" date="1998" name="Structure">
        <title>The crystal structure of human cytosolic serine hydroxymethyltransferase: a target for cancer chemotherapy.</title>
        <authorList>
            <person name="Renwick S.B."/>
            <person name="Snell K."/>
            <person name="Baumann U."/>
        </authorList>
    </citation>
    <scope>X-RAY CRYSTALLOGRAPHY (2.65 ANGSTROMS) OF 11-480</scope>
    <scope>COFACTOR</scope>
    <scope>SUBUNIT</scope>
</reference>
<evidence type="ECO:0000269" key="1">
    <source>
    </source>
</evidence>
<evidence type="ECO:0000269" key="2">
    <source>
    </source>
</evidence>
<evidence type="ECO:0000269" key="3">
    <source>
    </source>
</evidence>
<evidence type="ECO:0000269" key="4">
    <source>
    </source>
</evidence>
<evidence type="ECO:0000269" key="5">
    <source>
    </source>
</evidence>
<evidence type="ECO:0000269" key="6">
    <source>
    </source>
</evidence>
<evidence type="ECO:0000269" key="7">
    <source ref="6"/>
</evidence>
<evidence type="ECO:0000303" key="8">
    <source>
    </source>
</evidence>
<evidence type="ECO:0000303" key="9">
    <source>
    </source>
</evidence>
<evidence type="ECO:0000305" key="10"/>
<evidence type="ECO:0000305" key="11">
    <source>
    </source>
</evidence>
<evidence type="ECO:0007744" key="12">
    <source>
        <dbReference type="PDB" id="1BJ4"/>
    </source>
</evidence>
<evidence type="ECO:0007744" key="13">
    <source>
    </source>
</evidence>
<evidence type="ECO:0007829" key="14">
    <source>
        <dbReference type="PDB" id="6M5W"/>
    </source>
</evidence>
<evidence type="ECO:0007829" key="15">
    <source>
        <dbReference type="PDB" id="8R7H"/>
    </source>
</evidence>
<protein>
    <recommendedName>
        <fullName>Serine hydroxymethyltransferase, cytosolic</fullName>
        <shortName>SHMT</shortName>
        <ecNumber evidence="3 5">2.1.2.1</ecNumber>
    </recommendedName>
    <alternativeName>
        <fullName>Glycine hydroxymethyltransferase</fullName>
    </alternativeName>
    <alternativeName>
        <fullName>Serine methylase</fullName>
    </alternativeName>
</protein>